<comment type="function">
    <text evidence="1">Part of a heterotetrameric complex that catalyzes the two-step biosynthesis of anthranilate, an intermediate in the biosynthesis of L-tryptophan. In the first step, the glutamine-binding beta subunit (TrpG) of anthranilate synthase (AS) provides the glutamine amidotransferase activity which generates ammonia as a substrate that, along with chorismate, is used in the second step, catalyzed by the large alpha subunit of AS (TrpE) to produce anthranilate. In the absence of TrpG, TrpE can synthesize anthranilate directly from chorismate and high concentrations of ammonia (By similarity).</text>
</comment>
<comment type="catalytic activity">
    <reaction>
        <text>chorismate + L-glutamine = anthranilate + pyruvate + L-glutamate + H(+)</text>
        <dbReference type="Rhea" id="RHEA:21732"/>
        <dbReference type="ChEBI" id="CHEBI:15361"/>
        <dbReference type="ChEBI" id="CHEBI:15378"/>
        <dbReference type="ChEBI" id="CHEBI:16567"/>
        <dbReference type="ChEBI" id="CHEBI:29748"/>
        <dbReference type="ChEBI" id="CHEBI:29985"/>
        <dbReference type="ChEBI" id="CHEBI:58359"/>
        <dbReference type="EC" id="4.1.3.27"/>
    </reaction>
</comment>
<comment type="cofactor">
    <cofactor evidence="2">
        <name>Mg(2+)</name>
        <dbReference type="ChEBI" id="CHEBI:18420"/>
    </cofactor>
    <text evidence="2">Binds 1 Mg(2+) ion per subunit.</text>
</comment>
<comment type="activity regulation">
    <text evidence="1">Feedback inhibited by tryptophan.</text>
</comment>
<comment type="pathway">
    <text>Amino-acid biosynthesis; L-tryptophan biosynthesis; L-tryptophan from chorismate: step 1/5.</text>
</comment>
<comment type="subunit">
    <text evidence="1">Heterotetramer consisting of two non-identical subunits: a beta subunit (TrpG) and a large alpha subunit (TrpE).</text>
</comment>
<comment type="similarity">
    <text evidence="5">Belongs to the anthranilate synthase component I family.</text>
</comment>
<sequence>MQTTANHSSRSTQTGTRAHGAALAETTSREDFRALATEHRVVPVIRKVLADSETPLSAYRKLAANRPGTFLLESAENGRSWSRWSFIGAGAPSALTVRDNAAAWLGTAPEGAPSGGDPLDALRATLDLLKTEAMAGLPPLSSGLVGFFAYDMVRRLERLPELAVDDLGLPDMLLLLATDIAAVDHHEGTITLIANAVNWNGTDERVDWAYDDAVARLDVMTKALGQPLTSAVATFSRPAPDHRAQRTMEEYTEIVDKLVGDIEAGEAFQVVPSQRFEMDTAADPLDVYRILRVTNPSPYMYLLNIPDADGGLDFSIVGSSPEALVTVKDGRATTHPIAGTRWRGATEEEDVLLEKELLADEKERAEHLMLVDLGRNDLGRVCRPGTVRVDDYSHIERYSHVMHLVSTVTGELAEDKTALDAVTACFPAGTLSGAPKVRAMELIEEVEKTRRGLYGGVVGYLDFAGNADFAIAIRTALMRNGTAYVQAGGGVVADSNGPYEYTEAANKARAVLNAIAAAATLAEP</sequence>
<evidence type="ECO:0000250" key="1"/>
<evidence type="ECO:0000250" key="2">
    <source>
        <dbReference type="UniProtKB" id="P00897"/>
    </source>
</evidence>
<evidence type="ECO:0000256" key="3">
    <source>
        <dbReference type="SAM" id="MobiDB-lite"/>
    </source>
</evidence>
<evidence type="ECO:0000269" key="4">
    <source>
    </source>
</evidence>
<evidence type="ECO:0000305" key="5"/>
<evidence type="ECO:0007829" key="6">
    <source>
        <dbReference type="PDB" id="7BVD"/>
    </source>
</evidence>
<accession>A0QX93</accession>
<accession>I7GAR3</accession>
<proteinExistence type="evidence at protein level"/>
<keyword id="KW-0002">3D-structure</keyword>
<keyword id="KW-0028">Amino-acid biosynthesis</keyword>
<keyword id="KW-0057">Aromatic amino acid biosynthesis</keyword>
<keyword id="KW-1017">Isopeptide bond</keyword>
<keyword id="KW-0456">Lyase</keyword>
<keyword id="KW-0460">Magnesium</keyword>
<keyword id="KW-0479">Metal-binding</keyword>
<keyword id="KW-1185">Reference proteome</keyword>
<keyword id="KW-0822">Tryptophan biosynthesis</keyword>
<keyword id="KW-0832">Ubl conjugation</keyword>
<protein>
    <recommendedName>
        <fullName>Anthranilate synthase component 1</fullName>
        <shortName>AS</shortName>
        <shortName>ASI</shortName>
        <ecNumber>4.1.3.27</ecNumber>
    </recommendedName>
</protein>
<feature type="chain" id="PRO_0000396112" description="Anthranilate synthase component 1">
    <location>
        <begin position="1"/>
        <end position="524"/>
    </location>
</feature>
<feature type="region of interest" description="Disordered" evidence="3">
    <location>
        <begin position="1"/>
        <end position="25"/>
    </location>
</feature>
<feature type="compositionally biased region" description="Polar residues" evidence="3">
    <location>
        <begin position="1"/>
        <end position="16"/>
    </location>
</feature>
<feature type="binding site" evidence="2">
    <location>
        <position position="74"/>
    </location>
    <ligand>
        <name>L-tryptophan</name>
        <dbReference type="ChEBI" id="CHEBI:57912"/>
    </ligand>
</feature>
<feature type="binding site" evidence="2">
    <location>
        <begin position="298"/>
        <end position="300"/>
    </location>
    <ligand>
        <name>L-tryptophan</name>
        <dbReference type="ChEBI" id="CHEBI:57912"/>
    </ligand>
</feature>
<feature type="binding site" evidence="2">
    <location>
        <begin position="339"/>
        <end position="340"/>
    </location>
    <ligand>
        <name>chorismate</name>
        <dbReference type="ChEBI" id="CHEBI:29748"/>
    </ligand>
</feature>
<feature type="binding site" evidence="2">
    <location>
        <position position="366"/>
    </location>
    <ligand>
        <name>Mg(2+)</name>
        <dbReference type="ChEBI" id="CHEBI:18420"/>
    </ligand>
</feature>
<feature type="binding site" evidence="2">
    <location>
        <position position="454"/>
    </location>
    <ligand>
        <name>chorismate</name>
        <dbReference type="ChEBI" id="CHEBI:29748"/>
    </ligand>
</feature>
<feature type="binding site" evidence="2">
    <location>
        <position position="474"/>
    </location>
    <ligand>
        <name>chorismate</name>
        <dbReference type="ChEBI" id="CHEBI:29748"/>
    </ligand>
</feature>
<feature type="binding site" evidence="2">
    <location>
        <begin position="488"/>
        <end position="490"/>
    </location>
    <ligand>
        <name>chorismate</name>
        <dbReference type="ChEBI" id="CHEBI:29748"/>
    </ligand>
</feature>
<feature type="binding site" evidence="2">
    <location>
        <position position="490"/>
    </location>
    <ligand>
        <name>chorismate</name>
        <dbReference type="ChEBI" id="CHEBI:29748"/>
    </ligand>
</feature>
<feature type="binding site" evidence="2">
    <location>
        <position position="503"/>
    </location>
    <ligand>
        <name>Mg(2+)</name>
        <dbReference type="ChEBI" id="CHEBI:18420"/>
    </ligand>
</feature>
<feature type="cross-link" description="Isoglutamyl lysine isopeptide (Lys-Gln) (interchain with Q-Cter in protein Pup)" evidence="4">
    <location>
        <position position="355"/>
    </location>
</feature>
<feature type="helix" evidence="6">
    <location>
        <begin position="29"/>
        <end position="36"/>
    </location>
</feature>
<feature type="strand" evidence="6">
    <location>
        <begin position="40"/>
        <end position="49"/>
    </location>
</feature>
<feature type="helix" evidence="6">
    <location>
        <begin position="55"/>
        <end position="62"/>
    </location>
</feature>
<feature type="turn" evidence="6">
    <location>
        <begin position="63"/>
        <end position="65"/>
    </location>
</feature>
<feature type="strand" evidence="6">
    <location>
        <begin position="70"/>
        <end position="73"/>
    </location>
</feature>
<feature type="strand" evidence="6">
    <location>
        <begin position="83"/>
        <end position="88"/>
    </location>
</feature>
<feature type="strand" evidence="6">
    <location>
        <begin position="92"/>
        <end position="98"/>
    </location>
</feature>
<feature type="strand" evidence="6">
    <location>
        <begin position="101"/>
        <end position="106"/>
    </location>
</feature>
<feature type="helix" evidence="6">
    <location>
        <begin position="118"/>
        <end position="129"/>
    </location>
</feature>
<feature type="strand" evidence="6">
    <location>
        <begin position="142"/>
        <end position="148"/>
    </location>
</feature>
<feature type="helix" evidence="6">
    <location>
        <begin position="150"/>
        <end position="155"/>
    </location>
</feature>
<feature type="strand" evidence="6">
    <location>
        <begin position="171"/>
        <end position="177"/>
    </location>
</feature>
<feature type="strand" evidence="6">
    <location>
        <begin position="179"/>
        <end position="184"/>
    </location>
</feature>
<feature type="turn" evidence="6">
    <location>
        <begin position="185"/>
        <end position="188"/>
    </location>
</feature>
<feature type="strand" evidence="6">
    <location>
        <begin position="189"/>
        <end position="197"/>
    </location>
</feature>
<feature type="helix" evidence="6">
    <location>
        <begin position="206"/>
        <end position="224"/>
    </location>
</feature>
<feature type="strand" evidence="6">
    <location>
        <begin position="243"/>
        <end position="246"/>
    </location>
</feature>
<feature type="helix" evidence="6">
    <location>
        <begin position="248"/>
        <end position="263"/>
    </location>
</feature>
<feature type="strand" evidence="6">
    <location>
        <begin position="268"/>
        <end position="270"/>
    </location>
</feature>
<feature type="strand" evidence="6">
    <location>
        <begin position="273"/>
        <end position="279"/>
    </location>
</feature>
<feature type="helix" evidence="6">
    <location>
        <begin position="284"/>
        <end position="294"/>
    </location>
</feature>
<feature type="strand" evidence="6">
    <location>
        <begin position="298"/>
        <end position="306"/>
    </location>
</feature>
<feature type="strand" evidence="6">
    <location>
        <begin position="310"/>
        <end position="320"/>
    </location>
</feature>
<feature type="strand" evidence="6">
    <location>
        <begin position="323"/>
        <end position="328"/>
    </location>
</feature>
<feature type="strand" evidence="6">
    <location>
        <begin position="331"/>
        <end position="334"/>
    </location>
</feature>
<feature type="strand" evidence="6">
    <location>
        <begin position="337"/>
        <end position="341"/>
    </location>
</feature>
<feature type="helix" evidence="6">
    <location>
        <begin position="349"/>
        <end position="359"/>
    </location>
</feature>
<feature type="helix" evidence="6">
    <location>
        <begin position="364"/>
        <end position="379"/>
    </location>
</feature>
<feature type="strand" evidence="6">
    <location>
        <begin position="388"/>
        <end position="397"/>
    </location>
</feature>
<feature type="strand" evidence="6">
    <location>
        <begin position="402"/>
        <end position="412"/>
    </location>
</feature>
<feature type="helix" evidence="6">
    <location>
        <begin position="418"/>
        <end position="425"/>
    </location>
</feature>
<feature type="helix" evidence="6">
    <location>
        <begin position="429"/>
        <end position="431"/>
    </location>
</feature>
<feature type="strand" evidence="6">
    <location>
        <begin position="432"/>
        <end position="435"/>
    </location>
</feature>
<feature type="helix" evidence="6">
    <location>
        <begin position="436"/>
        <end position="446"/>
    </location>
</feature>
<feature type="turn" evidence="6">
    <location>
        <begin position="452"/>
        <end position="455"/>
    </location>
</feature>
<feature type="strand" evidence="6">
    <location>
        <begin position="456"/>
        <end position="462"/>
    </location>
</feature>
<feature type="strand" evidence="6">
    <location>
        <begin position="467"/>
        <end position="472"/>
    </location>
</feature>
<feature type="strand" evidence="6">
    <location>
        <begin position="474"/>
        <end position="479"/>
    </location>
</feature>
<feature type="strand" evidence="6">
    <location>
        <begin position="482"/>
        <end position="488"/>
    </location>
</feature>
<feature type="helix" evidence="6">
    <location>
        <begin position="497"/>
        <end position="518"/>
    </location>
</feature>
<dbReference type="EC" id="4.1.3.27"/>
<dbReference type="EMBL" id="CP000480">
    <property type="protein sequence ID" value="ABK74885.1"/>
    <property type="molecule type" value="Genomic_DNA"/>
</dbReference>
<dbReference type="EMBL" id="CP001663">
    <property type="protein sequence ID" value="AFP39599.1"/>
    <property type="molecule type" value="Genomic_DNA"/>
</dbReference>
<dbReference type="RefSeq" id="WP_003894606.1">
    <property type="nucleotide sequence ID" value="NZ_SIJM01000015.1"/>
</dbReference>
<dbReference type="RefSeq" id="YP_887531.1">
    <property type="nucleotide sequence ID" value="NC_008596.1"/>
</dbReference>
<dbReference type="PDB" id="7BVD">
    <property type="method" value="X-ray"/>
    <property type="resolution" value="1.70 A"/>
    <property type="chains" value="A/B=1-524"/>
</dbReference>
<dbReference type="PDBsum" id="7BVD"/>
<dbReference type="SMR" id="A0QX93"/>
<dbReference type="STRING" id="246196.MSMEG_3217"/>
<dbReference type="PaxDb" id="246196-MSMEI_3135"/>
<dbReference type="KEGG" id="msb:LJ00_15995"/>
<dbReference type="KEGG" id="msg:MSMEI_3135"/>
<dbReference type="KEGG" id="msm:MSMEG_3217"/>
<dbReference type="PATRIC" id="fig|246196.19.peg.3179"/>
<dbReference type="eggNOG" id="COG0147">
    <property type="taxonomic scope" value="Bacteria"/>
</dbReference>
<dbReference type="OrthoDB" id="3518032at2"/>
<dbReference type="UniPathway" id="UPA00035">
    <property type="reaction ID" value="UER00040"/>
</dbReference>
<dbReference type="Proteomes" id="UP000000757">
    <property type="component" value="Chromosome"/>
</dbReference>
<dbReference type="Proteomes" id="UP000006158">
    <property type="component" value="Chromosome"/>
</dbReference>
<dbReference type="GO" id="GO:0004049">
    <property type="term" value="F:anthranilate synthase activity"/>
    <property type="evidence" value="ECO:0007669"/>
    <property type="project" value="UniProtKB-EC"/>
</dbReference>
<dbReference type="GO" id="GO:0046872">
    <property type="term" value="F:metal ion binding"/>
    <property type="evidence" value="ECO:0007669"/>
    <property type="project" value="UniProtKB-KW"/>
</dbReference>
<dbReference type="GO" id="GO:0000162">
    <property type="term" value="P:L-tryptophan biosynthetic process"/>
    <property type="evidence" value="ECO:0007669"/>
    <property type="project" value="UniProtKB-UniPathway"/>
</dbReference>
<dbReference type="FunFam" id="3.60.120.10:FF:000008">
    <property type="entry name" value="Anthranilate synthase component 1"/>
    <property type="match status" value="1"/>
</dbReference>
<dbReference type="Gene3D" id="3.60.120.10">
    <property type="entry name" value="Anthranilate synthase"/>
    <property type="match status" value="1"/>
</dbReference>
<dbReference type="InterPro" id="IPR005801">
    <property type="entry name" value="ADC_synthase"/>
</dbReference>
<dbReference type="InterPro" id="IPR019999">
    <property type="entry name" value="Anth_synth_I-like"/>
</dbReference>
<dbReference type="InterPro" id="IPR006805">
    <property type="entry name" value="Anth_synth_I_N"/>
</dbReference>
<dbReference type="InterPro" id="IPR005256">
    <property type="entry name" value="Anth_synth_I_PabB"/>
</dbReference>
<dbReference type="InterPro" id="IPR015890">
    <property type="entry name" value="Chorismate_C"/>
</dbReference>
<dbReference type="NCBIfam" id="NF010086">
    <property type="entry name" value="PRK13571.1"/>
    <property type="match status" value="1"/>
</dbReference>
<dbReference type="NCBIfam" id="TIGR00564">
    <property type="entry name" value="trpE_most"/>
    <property type="match status" value="1"/>
</dbReference>
<dbReference type="PANTHER" id="PTHR11236">
    <property type="entry name" value="AMINOBENZOATE/ANTHRANILATE SYNTHASE"/>
    <property type="match status" value="1"/>
</dbReference>
<dbReference type="PANTHER" id="PTHR11236:SF46">
    <property type="entry name" value="ANTHRANILATE SYNTHASE COMPONENT 1"/>
    <property type="match status" value="1"/>
</dbReference>
<dbReference type="Pfam" id="PF04715">
    <property type="entry name" value="Anth_synt_I_N"/>
    <property type="match status" value="1"/>
</dbReference>
<dbReference type="Pfam" id="PF00425">
    <property type="entry name" value="Chorismate_bind"/>
    <property type="match status" value="1"/>
</dbReference>
<dbReference type="PRINTS" id="PR00095">
    <property type="entry name" value="ANTSNTHASEI"/>
</dbReference>
<dbReference type="SUPFAM" id="SSF56322">
    <property type="entry name" value="ADC synthase"/>
    <property type="match status" value="1"/>
</dbReference>
<name>TRPE_MYCS2</name>
<gene>
    <name type="primary">trpE</name>
    <name type="ordered locus">MSMEG_3217</name>
    <name type="ordered locus">MSMEI_3135</name>
</gene>
<organism>
    <name type="scientific">Mycolicibacterium smegmatis (strain ATCC 700084 / mc(2)155)</name>
    <name type="common">Mycobacterium smegmatis</name>
    <dbReference type="NCBI Taxonomy" id="246196"/>
    <lineage>
        <taxon>Bacteria</taxon>
        <taxon>Bacillati</taxon>
        <taxon>Actinomycetota</taxon>
        <taxon>Actinomycetes</taxon>
        <taxon>Mycobacteriales</taxon>
        <taxon>Mycobacteriaceae</taxon>
        <taxon>Mycolicibacterium</taxon>
    </lineage>
</organism>
<reference key="1">
    <citation type="submission" date="2006-10" db="EMBL/GenBank/DDBJ databases">
        <authorList>
            <person name="Fleischmann R.D."/>
            <person name="Dodson R.J."/>
            <person name="Haft D.H."/>
            <person name="Merkel J.S."/>
            <person name="Nelson W.C."/>
            <person name="Fraser C.M."/>
        </authorList>
    </citation>
    <scope>NUCLEOTIDE SEQUENCE [LARGE SCALE GENOMIC DNA]</scope>
    <source>
        <strain>ATCC 700084 / mc(2)155</strain>
    </source>
</reference>
<reference key="2">
    <citation type="journal article" date="2007" name="Genome Biol.">
        <title>Interrupted coding sequences in Mycobacterium smegmatis: authentic mutations or sequencing errors?</title>
        <authorList>
            <person name="Deshayes C."/>
            <person name="Perrodou E."/>
            <person name="Gallien S."/>
            <person name="Euphrasie D."/>
            <person name="Schaeffer C."/>
            <person name="Van-Dorsselaer A."/>
            <person name="Poch O."/>
            <person name="Lecompte O."/>
            <person name="Reyrat J.-M."/>
        </authorList>
    </citation>
    <scope>NUCLEOTIDE SEQUENCE [LARGE SCALE GENOMIC DNA]</scope>
    <source>
        <strain>ATCC 700084 / mc(2)155</strain>
    </source>
</reference>
<reference key="3">
    <citation type="journal article" date="2009" name="Genome Res.">
        <title>Ortho-proteogenomics: multiple proteomes investigation through orthology and a new MS-based protocol.</title>
        <authorList>
            <person name="Gallien S."/>
            <person name="Perrodou E."/>
            <person name="Carapito C."/>
            <person name="Deshayes C."/>
            <person name="Reyrat J.-M."/>
            <person name="Van Dorsselaer A."/>
            <person name="Poch O."/>
            <person name="Schaeffer C."/>
            <person name="Lecompte O."/>
        </authorList>
    </citation>
    <scope>NUCLEOTIDE SEQUENCE [LARGE SCALE GENOMIC DNA]</scope>
    <source>
        <strain>ATCC 700084 / mc(2)155</strain>
    </source>
</reference>
<reference key="4">
    <citation type="journal article" date="2010" name="Mol. Biosyst.">
        <title>Expansion of the mycobacterial 'PUPylome'.</title>
        <authorList>
            <person name="Watrous J."/>
            <person name="Burns K."/>
            <person name="Liu W.T."/>
            <person name="Patel A."/>
            <person name="Hook V."/>
            <person name="Bafna V."/>
            <person name="Barry C.E. III"/>
            <person name="Bark S."/>
            <person name="Dorrestein P.C."/>
        </authorList>
    </citation>
    <scope>PUPYLATION AT LYS-355</scope>
    <scope>IDENTIFICATION BY MASS SPECTROMETRY</scope>
</reference>